<sequence>MGAATTGFPIKAAVIHFTALSRHEQYIVSRALCALRTQPRRAQVVRRRVSNLKRLVRAMRSYSGADGADVERFGKGTVTDLADAGRFLFLPARVALRRGYLIAKIQTFAFLTQEVTRVALAEYLVQELRQVQFALVCMLMTEDLYLSLMEQEHVPARLKTAVTHALVALWEQRPDERARRATSALHQVWCAREHLAPSFGSMLGSSELFLLSTELDEMWRDFLVQRLSEAGVCTALEEFLFGISHEQIQAIRLQLRAQGVAALSRQEAYALIGEKGGGENTQAHAYQRVADLCSFYRSFIIRKRDAQARLRLNMPGPVRTIEEHYVEYLFFRQGKPVLYINVRAAPSTKSFPLGKVCRVETSGQHLLFFHTPSPEASPRAPAWKAGCAKSTLSEGAVFVRLLVLPIRRSALALACLRARVRAPRTDVA</sequence>
<proteinExistence type="predicted"/>
<organism>
    <name type="scientific">Treponema pallidum (strain Nichols)</name>
    <dbReference type="NCBI Taxonomy" id="243276"/>
    <lineage>
        <taxon>Bacteria</taxon>
        <taxon>Pseudomonadati</taxon>
        <taxon>Spirochaetota</taxon>
        <taxon>Spirochaetia</taxon>
        <taxon>Spirochaetales</taxon>
        <taxon>Treponemataceae</taxon>
        <taxon>Treponema</taxon>
    </lineage>
</organism>
<reference key="1">
    <citation type="journal article" date="1998" name="Science">
        <title>Complete genome sequence of Treponema pallidum, the syphilis spirochete.</title>
        <authorList>
            <person name="Fraser C.M."/>
            <person name="Norris S.J."/>
            <person name="Weinstock G.M."/>
            <person name="White O."/>
            <person name="Sutton G.G."/>
            <person name="Dodson R.J."/>
            <person name="Gwinn M.L."/>
            <person name="Hickey E.K."/>
            <person name="Clayton R.A."/>
            <person name="Ketchum K.A."/>
            <person name="Sodergren E."/>
            <person name="Hardham J.M."/>
            <person name="McLeod M.P."/>
            <person name="Salzberg S.L."/>
            <person name="Peterson J.D."/>
            <person name="Khalak H.G."/>
            <person name="Richardson D.L."/>
            <person name="Howell J.K."/>
            <person name="Chidambaram M."/>
            <person name="Utterback T.R."/>
            <person name="McDonald L.A."/>
            <person name="Artiach P."/>
            <person name="Bowman C."/>
            <person name="Cotton M.D."/>
            <person name="Fujii C."/>
            <person name="Garland S.A."/>
            <person name="Hatch B."/>
            <person name="Horst K."/>
            <person name="Roberts K.M."/>
            <person name="Sandusky M."/>
            <person name="Weidman J.F."/>
            <person name="Smith H.O."/>
            <person name="Venter J.C."/>
        </authorList>
    </citation>
    <scope>NUCLEOTIDE SEQUENCE [LARGE SCALE GENOMIC DNA]</scope>
    <source>
        <strain>Nichols</strain>
    </source>
</reference>
<keyword id="KW-1185">Reference proteome</keyword>
<dbReference type="EMBL" id="AE000520">
    <property type="protein sequence ID" value="AAC65785.1"/>
    <property type="molecule type" value="Genomic_DNA"/>
</dbReference>
<dbReference type="PIR" id="B71278">
    <property type="entry name" value="B71278"/>
</dbReference>
<dbReference type="RefSeq" id="WP_010882257.1">
    <property type="nucleotide sequence ID" value="NC_000919.1"/>
</dbReference>
<dbReference type="IntAct" id="O83789">
    <property type="interactions" value="4"/>
</dbReference>
<dbReference type="EnsemblBacteria" id="AAC65785">
    <property type="protein sequence ID" value="AAC65785"/>
    <property type="gene ID" value="TP_0813"/>
</dbReference>
<dbReference type="KEGG" id="tpa:TP_0813"/>
<dbReference type="eggNOG" id="ENOG503391B">
    <property type="taxonomic scope" value="Bacteria"/>
</dbReference>
<dbReference type="HOGENOM" id="CLU_052664_0_0_12"/>
<dbReference type="Proteomes" id="UP000000811">
    <property type="component" value="Chromosome"/>
</dbReference>
<accession>O83789</accession>
<gene>
    <name type="ordered locus">TP_0813</name>
</gene>
<protein>
    <recommendedName>
        <fullName>Uncharacterized protein TP_0813</fullName>
    </recommendedName>
</protein>
<feature type="chain" id="PRO_0000202332" description="Uncharacterized protein TP_0813">
    <location>
        <begin position="1"/>
        <end position="428"/>
    </location>
</feature>
<name>Y813_TREPA</name>